<organism>
    <name type="scientific">Methanocaldococcus jannaschii (strain ATCC 43067 / DSM 2661 / JAL-1 / JCM 10045 / NBRC 100440)</name>
    <name type="common">Methanococcus jannaschii</name>
    <dbReference type="NCBI Taxonomy" id="243232"/>
    <lineage>
        <taxon>Archaea</taxon>
        <taxon>Methanobacteriati</taxon>
        <taxon>Methanobacteriota</taxon>
        <taxon>Methanomada group</taxon>
        <taxon>Methanococci</taxon>
        <taxon>Methanococcales</taxon>
        <taxon>Methanocaldococcaceae</taxon>
        <taxon>Methanocaldococcus</taxon>
    </lineage>
</organism>
<feature type="chain" id="PRO_0000106683" description="Uncharacterized protein MJ0077">
    <location>
        <begin position="1"/>
        <end position="382"/>
    </location>
</feature>
<proteinExistence type="predicted"/>
<name>Y077_METJA</name>
<reference key="1">
    <citation type="journal article" date="1996" name="Science">
        <title>Complete genome sequence of the methanogenic archaeon, Methanococcus jannaschii.</title>
        <authorList>
            <person name="Bult C.J."/>
            <person name="White O."/>
            <person name="Olsen G.J."/>
            <person name="Zhou L."/>
            <person name="Fleischmann R.D."/>
            <person name="Sutton G.G."/>
            <person name="Blake J.A."/>
            <person name="FitzGerald L.M."/>
            <person name="Clayton R.A."/>
            <person name="Gocayne J.D."/>
            <person name="Kerlavage A.R."/>
            <person name="Dougherty B.A."/>
            <person name="Tomb J.-F."/>
            <person name="Adams M.D."/>
            <person name="Reich C.I."/>
            <person name="Overbeek R."/>
            <person name="Kirkness E.F."/>
            <person name="Weinstock K.G."/>
            <person name="Merrick J.M."/>
            <person name="Glodek A."/>
            <person name="Scott J.L."/>
            <person name="Geoghagen N.S.M."/>
            <person name="Weidman J.F."/>
            <person name="Fuhrmann J.L."/>
            <person name="Nguyen D."/>
            <person name="Utterback T.R."/>
            <person name="Kelley J.M."/>
            <person name="Peterson J.D."/>
            <person name="Sadow P.W."/>
            <person name="Hanna M.C."/>
            <person name="Cotton M.D."/>
            <person name="Roberts K.M."/>
            <person name="Hurst M.A."/>
            <person name="Kaine B.P."/>
            <person name="Borodovsky M."/>
            <person name="Klenk H.-P."/>
            <person name="Fraser C.M."/>
            <person name="Smith H.O."/>
            <person name="Woese C.R."/>
            <person name="Venter J.C."/>
        </authorList>
    </citation>
    <scope>NUCLEOTIDE SEQUENCE [LARGE SCALE GENOMIC DNA]</scope>
    <source>
        <strain>ATCC 43067 / DSM 2661 / JAL-1 / JCM 10045 / NBRC 100440</strain>
    </source>
</reference>
<accession>Q60384</accession>
<sequence>MIRYDKYDKMVWEGCKNKITFHLSERETEIVFYLFFKYEVEILTETDLIKKIVRDRRFKNVKSITTLDENYSLIATEFFCEKLKELKEKGREEDISELLDELESYMENITSSFSSFGSGEGYKSYTDPKKKLELTEKLLKNNKLKEFMKVLGKFKRMAIKKYKTKIKHFSGEKYSINLGNNLINLLSSEYKNFAEEILFVDLLRRYNENKPLNYKILENNENCGDFVVCLDLSGSMRGNKEIWAKAIALCLMDISLKRNKRYISILFDDGVRDIKIYEKKVSFDEILEFASVFYGGGTNFEKPLREALKFNGDIVFITDGECEVSLEFLEKIKEEKQRRKIKIYSICINTKPTVSLRQISDVSVTIYELTSKTAEKVFDMLI</sequence>
<keyword id="KW-1185">Reference proteome</keyword>
<gene>
    <name type="ordered locus">MJ0077</name>
</gene>
<protein>
    <recommendedName>
        <fullName>Uncharacterized protein MJ0077</fullName>
    </recommendedName>
</protein>
<dbReference type="EMBL" id="L77117">
    <property type="protein sequence ID" value="AAB98058.1"/>
    <property type="molecule type" value="Genomic_DNA"/>
</dbReference>
<dbReference type="PIR" id="D64309">
    <property type="entry name" value="D64309"/>
</dbReference>
<dbReference type="RefSeq" id="WP_010869568.1">
    <property type="nucleotide sequence ID" value="NC_000909.1"/>
</dbReference>
<dbReference type="SMR" id="Q60384"/>
<dbReference type="STRING" id="243232.MJ_0077"/>
<dbReference type="PaxDb" id="243232-MJ_0077"/>
<dbReference type="EnsemblBacteria" id="AAB98058">
    <property type="protein sequence ID" value="AAB98058"/>
    <property type="gene ID" value="MJ_0077"/>
</dbReference>
<dbReference type="GeneID" id="1450915"/>
<dbReference type="KEGG" id="mja:MJ_0077"/>
<dbReference type="eggNOG" id="arCOG00442">
    <property type="taxonomic scope" value="Archaea"/>
</dbReference>
<dbReference type="HOGENOM" id="CLU_036888_0_0_2"/>
<dbReference type="InParanoid" id="Q60384"/>
<dbReference type="OrthoDB" id="64524at2157"/>
<dbReference type="Proteomes" id="UP000000805">
    <property type="component" value="Chromosome"/>
</dbReference>
<dbReference type="GO" id="GO:0005829">
    <property type="term" value="C:cytosol"/>
    <property type="evidence" value="ECO:0000318"/>
    <property type="project" value="GO_Central"/>
</dbReference>
<dbReference type="CDD" id="cd01462">
    <property type="entry name" value="VWA_YIEM_type"/>
    <property type="match status" value="1"/>
</dbReference>
<dbReference type="Gene3D" id="3.40.50.410">
    <property type="entry name" value="von Willebrand factor, type A domain"/>
    <property type="match status" value="1"/>
</dbReference>
<dbReference type="InterPro" id="IPR002035">
    <property type="entry name" value="VWF_A"/>
</dbReference>
<dbReference type="InterPro" id="IPR036465">
    <property type="entry name" value="vWFA_dom_sf"/>
</dbReference>
<dbReference type="PANTHER" id="PTHR36846">
    <property type="entry name" value="PROTEIN VIAA"/>
    <property type="match status" value="1"/>
</dbReference>
<dbReference type="PANTHER" id="PTHR36846:SF1">
    <property type="entry name" value="PROTEIN VIAA"/>
    <property type="match status" value="1"/>
</dbReference>
<dbReference type="SMART" id="SM00327">
    <property type="entry name" value="VWA"/>
    <property type="match status" value="1"/>
</dbReference>
<dbReference type="SUPFAM" id="SSF53300">
    <property type="entry name" value="vWA-like"/>
    <property type="match status" value="1"/>
</dbReference>